<comment type="function">
    <text evidence="1">Hydrolyzes ureidoacrylate to form aminoacrylate and carbamate. The carbamate hydrolyzes spontaneously, thereby releasing one of the nitrogen atoms of the pyrimidine ring as ammonia and one of its carbon atoms as CO2.</text>
</comment>
<comment type="catalytic activity">
    <reaction evidence="1">
        <text>(Z)-3-ureidoacrylate + H2O + H(+) = (Z)-3-aminoacrylate + NH4(+) + CO2</text>
        <dbReference type="Rhea" id="RHEA:42624"/>
        <dbReference type="ChEBI" id="CHEBI:15377"/>
        <dbReference type="ChEBI" id="CHEBI:15378"/>
        <dbReference type="ChEBI" id="CHEBI:16526"/>
        <dbReference type="ChEBI" id="CHEBI:28938"/>
        <dbReference type="ChEBI" id="CHEBI:59891"/>
        <dbReference type="ChEBI" id="CHEBI:59894"/>
        <dbReference type="EC" id="3.5.1.110"/>
    </reaction>
</comment>
<comment type="catalytic activity">
    <reaction evidence="1">
        <text>(Z)-3-ureidoacrylate + H2O = (Z)-3-aminoacrylate + carbamate + H(+)</text>
        <dbReference type="Rhea" id="RHEA:31603"/>
        <dbReference type="ChEBI" id="CHEBI:13941"/>
        <dbReference type="ChEBI" id="CHEBI:15377"/>
        <dbReference type="ChEBI" id="CHEBI:15378"/>
        <dbReference type="ChEBI" id="CHEBI:59891"/>
        <dbReference type="ChEBI" id="CHEBI:59894"/>
    </reaction>
</comment>
<comment type="catalytic activity">
    <reaction evidence="1">
        <text>(Z)-2-methylureidoacrylate + H2O + H(+) = (Z)-2-methylaminoacrylate + NH4(+) + CO2</text>
        <dbReference type="Rhea" id="RHEA:42620"/>
        <dbReference type="ChEBI" id="CHEBI:15377"/>
        <dbReference type="ChEBI" id="CHEBI:15378"/>
        <dbReference type="ChEBI" id="CHEBI:16526"/>
        <dbReference type="ChEBI" id="CHEBI:28938"/>
        <dbReference type="ChEBI" id="CHEBI:143783"/>
        <dbReference type="ChEBI" id="CHEBI:145735"/>
        <dbReference type="EC" id="3.5.1.110"/>
    </reaction>
</comment>
<comment type="induction">
    <text evidence="1">Up-regulated by the nitrogen regulatory protein C (NtrC also called GlnG) and repressed by RutR.</text>
</comment>
<comment type="similarity">
    <text evidence="1">Belongs to the isochorismatase family. RutB subfamily.</text>
</comment>
<evidence type="ECO:0000255" key="1">
    <source>
        <dbReference type="HAMAP-Rule" id="MF_00830"/>
    </source>
</evidence>
<gene>
    <name evidence="1" type="primary">rutB</name>
    <name type="ordered locus">UTI89_C1074</name>
</gene>
<organism>
    <name type="scientific">Escherichia coli (strain UTI89 / UPEC)</name>
    <dbReference type="NCBI Taxonomy" id="364106"/>
    <lineage>
        <taxon>Bacteria</taxon>
        <taxon>Pseudomonadati</taxon>
        <taxon>Pseudomonadota</taxon>
        <taxon>Gammaproteobacteria</taxon>
        <taxon>Enterobacterales</taxon>
        <taxon>Enterobacteriaceae</taxon>
        <taxon>Escherichia</taxon>
    </lineage>
</organism>
<name>RUTB_ECOUT</name>
<feature type="chain" id="PRO_0000402666" description="Ureidoacrylate amidohydrolase RutB">
    <location>
        <begin position="1"/>
        <end position="244"/>
    </location>
</feature>
<feature type="active site" description="Proton acceptor" evidence="1">
    <location>
        <position position="38"/>
    </location>
</feature>
<feature type="active site" evidence="1">
    <location>
        <position position="147"/>
    </location>
</feature>
<feature type="active site" description="Nucleophile" evidence="1">
    <location>
        <position position="180"/>
    </location>
</feature>
<protein>
    <recommendedName>
        <fullName evidence="1">Ureidoacrylate amidohydrolase RutB</fullName>
        <ecNumber evidence="1">3.5.1.110</ecNumber>
    </recommendedName>
</protein>
<dbReference type="EC" id="3.5.1.110" evidence="1"/>
<dbReference type="EMBL" id="CP000243">
    <property type="protein sequence ID" value="ABE06558.1"/>
    <property type="molecule type" value="Genomic_DNA"/>
</dbReference>
<dbReference type="SMR" id="Q1RDK6"/>
<dbReference type="KEGG" id="eci:UTI89_C1074"/>
<dbReference type="HOGENOM" id="CLU_068979_8_0_6"/>
<dbReference type="Proteomes" id="UP000001952">
    <property type="component" value="Chromosome"/>
</dbReference>
<dbReference type="GO" id="GO:0016811">
    <property type="term" value="F:hydrolase activity, acting on carbon-nitrogen (but not peptide) bonds, in linear amides"/>
    <property type="evidence" value="ECO:0007669"/>
    <property type="project" value="UniProtKB-UniRule"/>
</dbReference>
<dbReference type="GO" id="GO:0019740">
    <property type="term" value="P:nitrogen utilization"/>
    <property type="evidence" value="ECO:0007669"/>
    <property type="project" value="UniProtKB-UniRule"/>
</dbReference>
<dbReference type="GO" id="GO:0006212">
    <property type="term" value="P:uracil catabolic process"/>
    <property type="evidence" value="ECO:0007669"/>
    <property type="project" value="UniProtKB-UniRule"/>
</dbReference>
<dbReference type="CDD" id="cd00431">
    <property type="entry name" value="cysteine_hydrolases"/>
    <property type="match status" value="1"/>
</dbReference>
<dbReference type="FunFam" id="3.40.50.850:FF:000004">
    <property type="entry name" value="Peroxyureidoacrylate/ureidoacrylate amidohydrolase RutB"/>
    <property type="match status" value="1"/>
</dbReference>
<dbReference type="Gene3D" id="3.40.50.850">
    <property type="entry name" value="Isochorismatase-like"/>
    <property type="match status" value="1"/>
</dbReference>
<dbReference type="HAMAP" id="MF_00830">
    <property type="entry name" value="RutB"/>
    <property type="match status" value="1"/>
</dbReference>
<dbReference type="InterPro" id="IPR000868">
    <property type="entry name" value="Isochorismatase-like_dom"/>
</dbReference>
<dbReference type="InterPro" id="IPR050272">
    <property type="entry name" value="Isochorismatase-like_hydrls"/>
</dbReference>
<dbReference type="InterPro" id="IPR036380">
    <property type="entry name" value="Isochorismatase-like_sf"/>
</dbReference>
<dbReference type="InterPro" id="IPR019916">
    <property type="entry name" value="RutB"/>
</dbReference>
<dbReference type="NCBIfam" id="TIGR03614">
    <property type="entry name" value="RutB"/>
    <property type="match status" value="1"/>
</dbReference>
<dbReference type="PANTHER" id="PTHR43540:SF6">
    <property type="entry name" value="ISOCHORISMATASE-LIKE DOMAIN-CONTAINING PROTEIN"/>
    <property type="match status" value="1"/>
</dbReference>
<dbReference type="PANTHER" id="PTHR43540">
    <property type="entry name" value="PEROXYUREIDOACRYLATE/UREIDOACRYLATE AMIDOHYDROLASE-RELATED"/>
    <property type="match status" value="1"/>
</dbReference>
<dbReference type="Pfam" id="PF00857">
    <property type="entry name" value="Isochorismatase"/>
    <property type="match status" value="1"/>
</dbReference>
<dbReference type="SUPFAM" id="SSF52499">
    <property type="entry name" value="Isochorismatase-like hydrolases"/>
    <property type="match status" value="1"/>
</dbReference>
<sequence length="244" mass="26594">MPRPSPCADSGGGMMTTLTARPEAITFDPQQTALIVVDMQNAYATPGGYLDLAGFDVSTTRPVIANIQTAVTAARTAGMLIIWFQNGWDEQYVEAGGPGSPNYHKSNALKTMRNQPLLQGKLLAKGSWDYQLVDELVPQPGDIVLPKPRYSGFFNTPLDSILRSRGIRHLVFTGIATNVCVESTLRDGFFLEYFGVVLEDATHQAGPEFAQKAALFNIETFFGWVSDVETFCDALSSTSFARIA</sequence>
<reference key="1">
    <citation type="journal article" date="2006" name="Proc. Natl. Acad. Sci. U.S.A.">
        <title>Identification of genes subject to positive selection in uropathogenic strains of Escherichia coli: a comparative genomics approach.</title>
        <authorList>
            <person name="Chen S.L."/>
            <person name="Hung C.-S."/>
            <person name="Xu J."/>
            <person name="Reigstad C.S."/>
            <person name="Magrini V."/>
            <person name="Sabo A."/>
            <person name="Blasiar D."/>
            <person name="Bieri T."/>
            <person name="Meyer R.R."/>
            <person name="Ozersky P."/>
            <person name="Armstrong J.R."/>
            <person name="Fulton R.S."/>
            <person name="Latreille J.P."/>
            <person name="Spieth J."/>
            <person name="Hooton T.M."/>
            <person name="Mardis E.R."/>
            <person name="Hultgren S.J."/>
            <person name="Gordon J.I."/>
        </authorList>
    </citation>
    <scope>NUCLEOTIDE SEQUENCE [LARGE SCALE GENOMIC DNA]</scope>
    <source>
        <strain>UTI89 / UPEC</strain>
    </source>
</reference>
<proteinExistence type="inferred from homology"/>
<accession>Q1RDK6</accession>
<keyword id="KW-0378">Hydrolase</keyword>